<comment type="function">
    <text evidence="1">Plays a crucial role in the regulation of neural stem cells (NSCs) proliferation. Enhances the phosphorylation of GSK3B through the PI3K-Akt signaling pathway, thereby upregulating the Wnt/beta-catenin signaling pathway and promoting the proliferation of NSCs.</text>
</comment>
<comment type="subcellular location">
    <subcellularLocation>
        <location evidence="1">Nucleus</location>
    </subcellularLocation>
</comment>
<comment type="similarity">
    <text evidence="4">Belongs to the SBNO family.</text>
</comment>
<sequence>MVEPGQDLLLAALSESGISPNDLFDIDSPDVVLATPTPAVQQSVPLSALDLGLETEAPAAVKQEPETVSTPALLNVRQPPSTTTFVLNQINQLPTLGTTIVMTKTTPVTTTRQTITVAKIIQTSTTTRPSVAAPAVRNALTTAPSKDQIQLKDLLKNNSLNELMKLKPPPNIAQPVATAATDLSNGAVKKEASTKEVARIWINDVKMRSFSPTMKVPAVKEEEEPEEEDEEEMGHAETYAEYMPIKLKIGLRHPDPVVETSSLSSVTPPDVWYQTSISEETIDNGWLSALQLEAITYAAQQHETFLPNGDRAGFLIGDGAGVGKGRTIAGIIYENYLLGRKRAVWFSVSNDLKYDAERDLRDIGAKNILVHSLNKFKYGKISSKHNGSVKKGVIFATYSSLIGESQSGGKYKTRLKQLLHWCGEDFDGVIVFDECHKAKNLCPVGSSKPTKTGLAVLELQNKLPKARVVYASATGASEPRNMAYMNRLGIWGEGTPFREFSDFIQAVERRGVGAMEIVAMDMKLRGMYIARQLSFSGVTFKIDEVLLSQEYVKMYNKSVKLWVSARERFQQAADLIDAEQRMKKSMWGQFWSAHQRFFKYLCIASKVKRVVQLAREEIKNGKCVVIGLQSTGEARTLEALEEGGGELNDFVSTAKGVFQSLIEKHFPAPDRKKLFSLLGIDLTAQSNNNSPRDSPCKENKIKKRKGEEVSREAKKARKTGGLAGSSSDESESESDASDNEESDNESSRFLSSGDDDDFNPFRDESSEDDEDDPWLIRKEHKKVKEKKKKKSIDPDSIQSALLASGLGSKRPSCFTSTVGTTTSSTNASANSNTNSSFVTSQDAVERAQQMKKELLDKLEKLAEDLPPNTLDELIDELGGPENVAEMTGRKGRVVSNDDGSISYESRSELDVPVEILNITEKQRFMDGDKNIAIISEAASSGISLQADRRAKNQRRRVHMTLELPWSADRAIQQFGRTHRSNQVTAPEYVFLISELAGEQRFASIVAKRLESLGALTHGDRRATETRDLSRFNFDNKYGRNALEIVMKSIVNLDSPMVSPPPDFPGDFFKDVRQGLIGVGLINVEDRSGILTLDKDYNNIGKFLNRILGMEVHQQNALFQYFSDTLNAVIQNAKKNGRYDMGILDLGSGDEKVRKADVKKFLTPGYSTSGHVELYTISVERGMSWDEATKIWAEQTGPDDGFYLSLQIRNNKKTAILVKEVNPKKKLFWYTDQILGNNSN</sequence>
<accession>Q5F371</accession>
<keyword id="KW-0175">Coiled coil</keyword>
<keyword id="KW-0395">Inflammatory response</keyword>
<keyword id="KW-0539">Nucleus</keyword>
<keyword id="KW-1185">Reference proteome</keyword>
<keyword id="KW-0879">Wnt signaling pathway</keyword>
<gene>
    <name type="primary">SBNO1</name>
    <name type="ORF">RCJMB04_30k7</name>
</gene>
<evidence type="ECO:0000250" key="1">
    <source>
        <dbReference type="UniProtKB" id="Q689Z5"/>
    </source>
</evidence>
<evidence type="ECO:0000255" key="2"/>
<evidence type="ECO:0000256" key="3">
    <source>
        <dbReference type="SAM" id="MobiDB-lite"/>
    </source>
</evidence>
<evidence type="ECO:0000305" key="4"/>
<protein>
    <recommendedName>
        <fullName>Protein strawberry notch homolog 1</fullName>
    </recommendedName>
</protein>
<feature type="chain" id="PRO_0000314558" description="Protein strawberry notch homolog 1">
    <location>
        <begin position="1"/>
        <end position="1239"/>
    </location>
</feature>
<feature type="region of interest" description="Disordered" evidence="3">
    <location>
        <begin position="684"/>
        <end position="837"/>
    </location>
</feature>
<feature type="coiled-coil region" evidence="2">
    <location>
        <begin position="838"/>
        <end position="866"/>
    </location>
</feature>
<feature type="compositionally biased region" description="Basic and acidic residues" evidence="3">
    <location>
        <begin position="694"/>
        <end position="713"/>
    </location>
</feature>
<feature type="compositionally biased region" description="Acidic residues" evidence="3">
    <location>
        <begin position="728"/>
        <end position="744"/>
    </location>
</feature>
<feature type="compositionally biased region" description="Basic residues" evidence="3">
    <location>
        <begin position="778"/>
        <end position="790"/>
    </location>
</feature>
<feature type="compositionally biased region" description="Low complexity" evidence="3">
    <location>
        <begin position="814"/>
        <end position="837"/>
    </location>
</feature>
<proteinExistence type="evidence at transcript level"/>
<reference key="1">
    <citation type="journal article" date="2005" name="Genome Biol.">
        <title>Full-length cDNAs from chicken bursal lymphocytes to facilitate gene function analysis.</title>
        <authorList>
            <person name="Caldwell R.B."/>
            <person name="Kierzek A.M."/>
            <person name="Arakawa H."/>
            <person name="Bezzubov Y."/>
            <person name="Zaim J."/>
            <person name="Fiedler P."/>
            <person name="Kutter S."/>
            <person name="Blagodatski A."/>
            <person name="Kostovska D."/>
            <person name="Koter M."/>
            <person name="Plachy J."/>
            <person name="Carninci P."/>
            <person name="Hayashizaki Y."/>
            <person name="Buerstedde J.-M."/>
        </authorList>
    </citation>
    <scope>NUCLEOTIDE SEQUENCE [LARGE SCALE MRNA]</scope>
    <source>
        <strain>CB</strain>
        <tissue>Bursa of Fabricius</tissue>
    </source>
</reference>
<dbReference type="EMBL" id="AJ851779">
    <property type="protein sequence ID" value="CAH65413.1"/>
    <property type="molecule type" value="mRNA"/>
</dbReference>
<dbReference type="RefSeq" id="NP_001026640.1">
    <property type="nucleotide sequence ID" value="NM_001031469.1"/>
</dbReference>
<dbReference type="FunCoup" id="Q5F371">
    <property type="interactions" value="2488"/>
</dbReference>
<dbReference type="STRING" id="9031.ENSGALP00000058574"/>
<dbReference type="GlyGen" id="Q5F371">
    <property type="glycosylation" value="1 site"/>
</dbReference>
<dbReference type="PaxDb" id="9031-ENSGALP00000005353"/>
<dbReference type="GeneID" id="427694"/>
<dbReference type="KEGG" id="gga:427694"/>
<dbReference type="CTD" id="55206"/>
<dbReference type="VEuPathDB" id="HostDB:geneid_427694"/>
<dbReference type="eggNOG" id="KOG1513">
    <property type="taxonomic scope" value="Eukaryota"/>
</dbReference>
<dbReference type="InParanoid" id="Q5F371"/>
<dbReference type="OrthoDB" id="421838at2759"/>
<dbReference type="PhylomeDB" id="Q5F371"/>
<dbReference type="PRO" id="PR:Q5F371"/>
<dbReference type="Proteomes" id="UP000000539">
    <property type="component" value="Chromosome 15"/>
</dbReference>
<dbReference type="Bgee" id="ENSGALG00000003392">
    <property type="expression patterns" value="Expressed in spermatid and 13 other cell types or tissues"/>
</dbReference>
<dbReference type="GO" id="GO:0005634">
    <property type="term" value="C:nucleus"/>
    <property type="evidence" value="ECO:0000250"/>
    <property type="project" value="UniProtKB"/>
</dbReference>
<dbReference type="GO" id="GO:0031490">
    <property type="term" value="F:chromatin DNA binding"/>
    <property type="evidence" value="ECO:0000318"/>
    <property type="project" value="GO_Central"/>
</dbReference>
<dbReference type="GO" id="GO:0042393">
    <property type="term" value="F:histone binding"/>
    <property type="evidence" value="ECO:0000318"/>
    <property type="project" value="GO_Central"/>
</dbReference>
<dbReference type="GO" id="GO:0043124">
    <property type="term" value="P:negative regulation of canonical NF-kappaB signal transduction"/>
    <property type="evidence" value="ECO:0000250"/>
    <property type="project" value="UniProtKB"/>
</dbReference>
<dbReference type="GO" id="GO:0043409">
    <property type="term" value="P:negative regulation of MAPK cascade"/>
    <property type="evidence" value="ECO:0000250"/>
    <property type="project" value="UniProtKB"/>
</dbReference>
<dbReference type="GO" id="GO:0150079">
    <property type="term" value="P:negative regulation of neuroinflammatory response"/>
    <property type="evidence" value="ECO:0000250"/>
    <property type="project" value="UniProtKB"/>
</dbReference>
<dbReference type="GO" id="GO:0090263">
    <property type="term" value="P:positive regulation of canonical Wnt signaling pathway"/>
    <property type="evidence" value="ECO:0000250"/>
    <property type="project" value="UniProtKB"/>
</dbReference>
<dbReference type="GO" id="GO:2000179">
    <property type="term" value="P:positive regulation of neural precursor cell proliferation"/>
    <property type="evidence" value="ECO:0000250"/>
    <property type="project" value="UniProtKB"/>
</dbReference>
<dbReference type="GO" id="GO:0006355">
    <property type="term" value="P:regulation of DNA-templated transcription"/>
    <property type="evidence" value="ECO:0000318"/>
    <property type="project" value="GO_Central"/>
</dbReference>
<dbReference type="FunFam" id="3.40.50.300:FF:000282">
    <property type="entry name" value="Strawberry notch homolog 1 (Drosophila)"/>
    <property type="match status" value="1"/>
</dbReference>
<dbReference type="Gene3D" id="3.40.50.300">
    <property type="entry name" value="P-loop containing nucleotide triphosphate hydrolases"/>
    <property type="match status" value="2"/>
</dbReference>
<dbReference type="InterPro" id="IPR027417">
    <property type="entry name" value="P-loop_NTPase"/>
</dbReference>
<dbReference type="InterPro" id="IPR026937">
    <property type="entry name" value="SBNO_Helicase_C_dom"/>
</dbReference>
<dbReference type="InterPro" id="IPR026741">
    <property type="entry name" value="SNO"/>
</dbReference>
<dbReference type="InterPro" id="IPR039187">
    <property type="entry name" value="SNO_AAA"/>
</dbReference>
<dbReference type="PANTHER" id="PTHR12706:SF8">
    <property type="entry name" value="PROTEIN STRAWBERRY NOTCH HOMOLOG 1"/>
    <property type="match status" value="1"/>
</dbReference>
<dbReference type="PANTHER" id="PTHR12706">
    <property type="entry name" value="STRAWBERRY NOTCH-RELATED"/>
    <property type="match status" value="1"/>
</dbReference>
<dbReference type="Pfam" id="PF13872">
    <property type="entry name" value="AAA_34"/>
    <property type="match status" value="1"/>
</dbReference>
<dbReference type="Pfam" id="PF13871">
    <property type="entry name" value="Helicase_C_4"/>
    <property type="match status" value="1"/>
</dbReference>
<dbReference type="Pfam" id="PF25373">
    <property type="entry name" value="SBNO"/>
    <property type="match status" value="1"/>
</dbReference>
<dbReference type="SUPFAM" id="SSF52540">
    <property type="entry name" value="P-loop containing nucleoside triphosphate hydrolases"/>
    <property type="match status" value="2"/>
</dbReference>
<organism>
    <name type="scientific">Gallus gallus</name>
    <name type="common">Chicken</name>
    <dbReference type="NCBI Taxonomy" id="9031"/>
    <lineage>
        <taxon>Eukaryota</taxon>
        <taxon>Metazoa</taxon>
        <taxon>Chordata</taxon>
        <taxon>Craniata</taxon>
        <taxon>Vertebrata</taxon>
        <taxon>Euteleostomi</taxon>
        <taxon>Archelosauria</taxon>
        <taxon>Archosauria</taxon>
        <taxon>Dinosauria</taxon>
        <taxon>Saurischia</taxon>
        <taxon>Theropoda</taxon>
        <taxon>Coelurosauria</taxon>
        <taxon>Aves</taxon>
        <taxon>Neognathae</taxon>
        <taxon>Galloanserae</taxon>
        <taxon>Galliformes</taxon>
        <taxon>Phasianidae</taxon>
        <taxon>Phasianinae</taxon>
        <taxon>Gallus</taxon>
    </lineage>
</organism>
<name>SBNO1_CHICK</name>